<keyword id="KW-0067">ATP-binding</keyword>
<keyword id="KW-0274">FAD</keyword>
<keyword id="KW-0285">Flavoprotein</keyword>
<keyword id="KW-0288">FMN</keyword>
<keyword id="KW-0418">Kinase</keyword>
<keyword id="KW-0511">Multifunctional enzyme</keyword>
<keyword id="KW-0547">Nucleotide-binding</keyword>
<keyword id="KW-0548">Nucleotidyltransferase</keyword>
<keyword id="KW-0808">Transferase</keyword>
<reference key="1">
    <citation type="journal article" date="1990" name="J. Bacteriol.">
        <title>Nucleotide sequence of the Pseudomonas fluorescens signal peptidase II gene (lsp) and flanking genes.</title>
        <authorList>
            <person name="Isaki L."/>
            <person name="Beers R."/>
            <person name="Wu H.C."/>
        </authorList>
    </citation>
    <scope>NUCLEOTIDE SEQUENCE [GENOMIC DNA]</scope>
    <source>
        <strain>ATCC 49323 / NCIMB 10586</strain>
    </source>
</reference>
<feature type="chain" id="PRO_0000194141" description="Bifunctional riboflavin kinase/FMN adenylyltransferase">
    <location>
        <begin position="1"/>
        <end position="311"/>
    </location>
</feature>
<sequence length="311" mass="33898">MQLVRGLHNLRPEHRGCVATIGNFDGVHRGHQAILARLRERAVELGVPSCVVIFEPQPREFFTPETAPARLALARQAATAGGEGVDRVLCLAFNQRLRSLSAAEFVDRILVDGLGVQHLEVGDDFHFGCDRVGDFDFLQHAGVNQGFTVEAAQTVELDGLRVSSTQVRNALAAADFDLAERLLGRPFRIAGRVLHGQKLARQLGTPTANVQLKRRRVPLTGVYLVSVDIDGQSWPGVANIGVRPTVAGDGKAHLEVHLLDFAGDLYDRRLTVVFHQKLREEQRFASLEALKTAINADVAAARALAAPSAHR</sequence>
<proteinExistence type="inferred from homology"/>
<evidence type="ECO:0000250" key="1">
    <source>
        <dbReference type="UniProtKB" id="Q59263"/>
    </source>
</evidence>
<evidence type="ECO:0000305" key="2"/>
<organism>
    <name type="scientific">Pseudomonas fluorescens</name>
    <dbReference type="NCBI Taxonomy" id="294"/>
    <lineage>
        <taxon>Bacteria</taxon>
        <taxon>Pseudomonadati</taxon>
        <taxon>Pseudomonadota</taxon>
        <taxon>Gammaproteobacteria</taxon>
        <taxon>Pseudomonadales</taxon>
        <taxon>Pseudomonadaceae</taxon>
        <taxon>Pseudomonas</taxon>
    </lineage>
</organism>
<dbReference type="EC" id="2.7.1.26" evidence="1"/>
<dbReference type="EC" id="2.7.7.2" evidence="1"/>
<dbReference type="EMBL" id="M35367">
    <property type="protein sequence ID" value="AAA26021.1"/>
    <property type="molecule type" value="Genomic_DNA"/>
</dbReference>
<dbReference type="PIR" id="E37152">
    <property type="entry name" value="E37152"/>
</dbReference>
<dbReference type="SMR" id="P22990"/>
<dbReference type="eggNOG" id="COG0196">
    <property type="taxonomic scope" value="Bacteria"/>
</dbReference>
<dbReference type="UniPathway" id="UPA00276">
    <property type="reaction ID" value="UER00406"/>
</dbReference>
<dbReference type="UniPathway" id="UPA00277">
    <property type="reaction ID" value="UER00407"/>
</dbReference>
<dbReference type="GO" id="GO:0005524">
    <property type="term" value="F:ATP binding"/>
    <property type="evidence" value="ECO:0007669"/>
    <property type="project" value="UniProtKB-KW"/>
</dbReference>
<dbReference type="GO" id="GO:0003919">
    <property type="term" value="F:FMN adenylyltransferase activity"/>
    <property type="evidence" value="ECO:0007669"/>
    <property type="project" value="UniProtKB-EC"/>
</dbReference>
<dbReference type="GO" id="GO:0008531">
    <property type="term" value="F:riboflavin kinase activity"/>
    <property type="evidence" value="ECO:0007669"/>
    <property type="project" value="UniProtKB-EC"/>
</dbReference>
<dbReference type="GO" id="GO:0006747">
    <property type="term" value="P:FAD biosynthetic process"/>
    <property type="evidence" value="ECO:0007669"/>
    <property type="project" value="UniProtKB-UniPathway"/>
</dbReference>
<dbReference type="GO" id="GO:0009398">
    <property type="term" value="P:FMN biosynthetic process"/>
    <property type="evidence" value="ECO:0007669"/>
    <property type="project" value="UniProtKB-UniPathway"/>
</dbReference>
<dbReference type="GO" id="GO:0009231">
    <property type="term" value="P:riboflavin biosynthetic process"/>
    <property type="evidence" value="ECO:0007669"/>
    <property type="project" value="InterPro"/>
</dbReference>
<dbReference type="CDD" id="cd02064">
    <property type="entry name" value="FAD_synthetase_N"/>
    <property type="match status" value="1"/>
</dbReference>
<dbReference type="FunFam" id="3.40.50.620:FF:000021">
    <property type="entry name" value="Riboflavin biosynthesis protein"/>
    <property type="match status" value="1"/>
</dbReference>
<dbReference type="Gene3D" id="3.40.50.620">
    <property type="entry name" value="HUPs"/>
    <property type="match status" value="1"/>
</dbReference>
<dbReference type="Gene3D" id="2.40.30.30">
    <property type="entry name" value="Riboflavin kinase-like"/>
    <property type="match status" value="1"/>
</dbReference>
<dbReference type="InterPro" id="IPR015864">
    <property type="entry name" value="FAD_synthase"/>
</dbReference>
<dbReference type="InterPro" id="IPR023468">
    <property type="entry name" value="Riboflavin_kinase"/>
</dbReference>
<dbReference type="InterPro" id="IPR002606">
    <property type="entry name" value="Riboflavin_kinase_bac"/>
</dbReference>
<dbReference type="InterPro" id="IPR015865">
    <property type="entry name" value="Riboflavin_kinase_bac/euk"/>
</dbReference>
<dbReference type="InterPro" id="IPR023465">
    <property type="entry name" value="Riboflavin_kinase_dom_sf"/>
</dbReference>
<dbReference type="InterPro" id="IPR014729">
    <property type="entry name" value="Rossmann-like_a/b/a_fold"/>
</dbReference>
<dbReference type="NCBIfam" id="NF004159">
    <property type="entry name" value="PRK05627.1-2"/>
    <property type="match status" value="1"/>
</dbReference>
<dbReference type="NCBIfam" id="NF004160">
    <property type="entry name" value="PRK05627.1-3"/>
    <property type="match status" value="1"/>
</dbReference>
<dbReference type="NCBIfam" id="NF004163">
    <property type="entry name" value="PRK05627.1-6"/>
    <property type="match status" value="1"/>
</dbReference>
<dbReference type="NCBIfam" id="TIGR00083">
    <property type="entry name" value="ribF"/>
    <property type="match status" value="1"/>
</dbReference>
<dbReference type="PANTHER" id="PTHR22749:SF6">
    <property type="entry name" value="RIBOFLAVIN KINASE"/>
    <property type="match status" value="1"/>
</dbReference>
<dbReference type="PANTHER" id="PTHR22749">
    <property type="entry name" value="RIBOFLAVIN KINASE/FMN ADENYLYLTRANSFERASE"/>
    <property type="match status" value="1"/>
</dbReference>
<dbReference type="Pfam" id="PF06574">
    <property type="entry name" value="FAD_syn"/>
    <property type="match status" value="1"/>
</dbReference>
<dbReference type="Pfam" id="PF01687">
    <property type="entry name" value="Flavokinase"/>
    <property type="match status" value="1"/>
</dbReference>
<dbReference type="PIRSF" id="PIRSF004491">
    <property type="entry name" value="FAD_Synth"/>
    <property type="match status" value="1"/>
</dbReference>
<dbReference type="SMART" id="SM00904">
    <property type="entry name" value="Flavokinase"/>
    <property type="match status" value="1"/>
</dbReference>
<dbReference type="SUPFAM" id="SSF52374">
    <property type="entry name" value="Nucleotidylyl transferase"/>
    <property type="match status" value="1"/>
</dbReference>
<dbReference type="SUPFAM" id="SSF82114">
    <property type="entry name" value="Riboflavin kinase-like"/>
    <property type="match status" value="1"/>
</dbReference>
<gene>
    <name type="primary">ribF</name>
</gene>
<accession>P22990</accession>
<comment type="function">
    <text evidence="1">Catalyzes the phosphorylation of riboflavin to FMN followed by the adenylation of FMN to FAD.</text>
</comment>
<comment type="catalytic activity">
    <reaction evidence="1">
        <text>riboflavin + ATP = FMN + ADP + H(+)</text>
        <dbReference type="Rhea" id="RHEA:14357"/>
        <dbReference type="ChEBI" id="CHEBI:15378"/>
        <dbReference type="ChEBI" id="CHEBI:30616"/>
        <dbReference type="ChEBI" id="CHEBI:57986"/>
        <dbReference type="ChEBI" id="CHEBI:58210"/>
        <dbReference type="ChEBI" id="CHEBI:456216"/>
        <dbReference type="EC" id="2.7.1.26"/>
    </reaction>
</comment>
<comment type="catalytic activity">
    <reaction evidence="1">
        <text>FMN + ATP + H(+) = FAD + diphosphate</text>
        <dbReference type="Rhea" id="RHEA:17237"/>
        <dbReference type="ChEBI" id="CHEBI:15378"/>
        <dbReference type="ChEBI" id="CHEBI:30616"/>
        <dbReference type="ChEBI" id="CHEBI:33019"/>
        <dbReference type="ChEBI" id="CHEBI:57692"/>
        <dbReference type="ChEBI" id="CHEBI:58210"/>
        <dbReference type="EC" id="2.7.7.2"/>
    </reaction>
</comment>
<comment type="pathway">
    <text evidence="1">Cofactor biosynthesis; FAD biosynthesis; FAD from FMN: step 1/1.</text>
</comment>
<comment type="pathway">
    <text evidence="1">Cofactor biosynthesis; FMN biosynthesis; FMN from riboflavin (ATP route): step 1/1.</text>
</comment>
<comment type="similarity">
    <text evidence="2">Belongs to the RibF family.</text>
</comment>
<name>RIBF_PSEFL</name>
<protein>
    <recommendedName>
        <fullName evidence="1">Bifunctional riboflavin kinase/FMN adenylyltransferase</fullName>
    </recommendedName>
    <alternativeName>
        <fullName evidence="1">Riboflavin biosynthesis protein RibF</fullName>
    </alternativeName>
    <domain>
        <recommendedName>
            <fullName evidence="1">Riboflavin kinase</fullName>
            <ecNumber evidence="1">2.7.1.26</ecNumber>
        </recommendedName>
        <alternativeName>
            <fullName evidence="1">Flavokinase</fullName>
        </alternativeName>
    </domain>
    <domain>
        <recommendedName>
            <fullName evidence="1">FMN adenylyltransferase</fullName>
            <ecNumber evidence="1">2.7.7.2</ecNumber>
        </recommendedName>
        <alternativeName>
            <fullName evidence="1">FAD pyrophosphorylase</fullName>
        </alternativeName>
        <alternativeName>
            <fullName evidence="1">FAD synthase</fullName>
        </alternativeName>
    </domain>
</protein>